<accession>Q1AW85</accession>
<protein>
    <recommendedName>
        <fullName evidence="1">3-hydroxyacyl-[acyl-carrier-protein] dehydratase FabZ</fullName>
        <ecNumber evidence="1">4.2.1.59</ecNumber>
    </recommendedName>
    <alternativeName>
        <fullName evidence="1">(3R)-hydroxymyristoyl-[acyl-carrier-protein] dehydratase</fullName>
        <shortName evidence="1">(3R)-hydroxymyristoyl-ACP dehydrase</shortName>
    </alternativeName>
    <alternativeName>
        <fullName evidence="1">Beta-hydroxyacyl-ACP dehydratase</fullName>
    </alternativeName>
</protein>
<gene>
    <name evidence="1" type="primary">fabZ</name>
    <name type="ordered locus">Rxyl_1380</name>
</gene>
<feature type="chain" id="PRO_0000340798" description="3-hydroxyacyl-[acyl-carrier-protein] dehydratase FabZ">
    <location>
        <begin position="1"/>
        <end position="150"/>
    </location>
</feature>
<feature type="active site" evidence="1">
    <location>
        <position position="51"/>
    </location>
</feature>
<proteinExistence type="inferred from homology"/>
<comment type="function">
    <text evidence="1">Involved in unsaturated fatty acids biosynthesis. Catalyzes the dehydration of short chain beta-hydroxyacyl-ACPs and long chain saturated and unsaturated beta-hydroxyacyl-ACPs.</text>
</comment>
<comment type="catalytic activity">
    <reaction evidence="1">
        <text>a (3R)-hydroxyacyl-[ACP] = a (2E)-enoyl-[ACP] + H2O</text>
        <dbReference type="Rhea" id="RHEA:13097"/>
        <dbReference type="Rhea" id="RHEA-COMP:9925"/>
        <dbReference type="Rhea" id="RHEA-COMP:9945"/>
        <dbReference type="ChEBI" id="CHEBI:15377"/>
        <dbReference type="ChEBI" id="CHEBI:78784"/>
        <dbReference type="ChEBI" id="CHEBI:78827"/>
        <dbReference type="EC" id="4.2.1.59"/>
    </reaction>
</comment>
<comment type="subcellular location">
    <subcellularLocation>
        <location evidence="1">Cytoplasm</location>
    </subcellularLocation>
</comment>
<comment type="similarity">
    <text evidence="1">Belongs to the thioester dehydratase family. FabZ subfamily.</text>
</comment>
<dbReference type="EC" id="4.2.1.59" evidence="1"/>
<dbReference type="EMBL" id="CP000386">
    <property type="protein sequence ID" value="ABG04343.1"/>
    <property type="molecule type" value="Genomic_DNA"/>
</dbReference>
<dbReference type="RefSeq" id="WP_011564360.1">
    <property type="nucleotide sequence ID" value="NC_008148.1"/>
</dbReference>
<dbReference type="SMR" id="Q1AW85"/>
<dbReference type="STRING" id="266117.Rxyl_1380"/>
<dbReference type="KEGG" id="rxy:Rxyl_1380"/>
<dbReference type="eggNOG" id="COG0764">
    <property type="taxonomic scope" value="Bacteria"/>
</dbReference>
<dbReference type="HOGENOM" id="CLU_078912_3_0_11"/>
<dbReference type="OrthoDB" id="9772788at2"/>
<dbReference type="PhylomeDB" id="Q1AW85"/>
<dbReference type="Proteomes" id="UP000006637">
    <property type="component" value="Chromosome"/>
</dbReference>
<dbReference type="GO" id="GO:0005737">
    <property type="term" value="C:cytoplasm"/>
    <property type="evidence" value="ECO:0007669"/>
    <property type="project" value="UniProtKB-SubCell"/>
</dbReference>
<dbReference type="GO" id="GO:0016020">
    <property type="term" value="C:membrane"/>
    <property type="evidence" value="ECO:0007669"/>
    <property type="project" value="GOC"/>
</dbReference>
<dbReference type="GO" id="GO:0019171">
    <property type="term" value="F:(3R)-hydroxyacyl-[acyl-carrier-protein] dehydratase activity"/>
    <property type="evidence" value="ECO:0007669"/>
    <property type="project" value="UniProtKB-EC"/>
</dbReference>
<dbReference type="GO" id="GO:0006633">
    <property type="term" value="P:fatty acid biosynthetic process"/>
    <property type="evidence" value="ECO:0007669"/>
    <property type="project" value="UniProtKB-UniRule"/>
</dbReference>
<dbReference type="GO" id="GO:0009245">
    <property type="term" value="P:lipid A biosynthetic process"/>
    <property type="evidence" value="ECO:0007669"/>
    <property type="project" value="UniProtKB-UniRule"/>
</dbReference>
<dbReference type="CDD" id="cd01288">
    <property type="entry name" value="FabZ"/>
    <property type="match status" value="1"/>
</dbReference>
<dbReference type="FunFam" id="3.10.129.10:FF:000001">
    <property type="entry name" value="3-hydroxyacyl-[acyl-carrier-protein] dehydratase FabZ"/>
    <property type="match status" value="1"/>
</dbReference>
<dbReference type="Gene3D" id="3.10.129.10">
    <property type="entry name" value="Hotdog Thioesterase"/>
    <property type="match status" value="1"/>
</dbReference>
<dbReference type="HAMAP" id="MF_00406">
    <property type="entry name" value="FabZ"/>
    <property type="match status" value="1"/>
</dbReference>
<dbReference type="InterPro" id="IPR013114">
    <property type="entry name" value="FabA_FabZ"/>
</dbReference>
<dbReference type="InterPro" id="IPR010084">
    <property type="entry name" value="FabZ"/>
</dbReference>
<dbReference type="InterPro" id="IPR029069">
    <property type="entry name" value="HotDog_dom_sf"/>
</dbReference>
<dbReference type="NCBIfam" id="TIGR01750">
    <property type="entry name" value="fabZ"/>
    <property type="match status" value="1"/>
</dbReference>
<dbReference type="NCBIfam" id="NF000582">
    <property type="entry name" value="PRK00006.1"/>
    <property type="match status" value="1"/>
</dbReference>
<dbReference type="PANTHER" id="PTHR30272">
    <property type="entry name" value="3-HYDROXYACYL-[ACYL-CARRIER-PROTEIN] DEHYDRATASE"/>
    <property type="match status" value="1"/>
</dbReference>
<dbReference type="PANTHER" id="PTHR30272:SF1">
    <property type="entry name" value="3-HYDROXYACYL-[ACYL-CARRIER-PROTEIN] DEHYDRATASE"/>
    <property type="match status" value="1"/>
</dbReference>
<dbReference type="Pfam" id="PF07977">
    <property type="entry name" value="FabA"/>
    <property type="match status" value="1"/>
</dbReference>
<dbReference type="SUPFAM" id="SSF54637">
    <property type="entry name" value="Thioesterase/thiol ester dehydrase-isomerase"/>
    <property type="match status" value="1"/>
</dbReference>
<name>FABZ_RUBXD</name>
<keyword id="KW-0963">Cytoplasm</keyword>
<keyword id="KW-0441">Lipid A biosynthesis</keyword>
<keyword id="KW-0444">Lipid biosynthesis</keyword>
<keyword id="KW-0443">Lipid metabolism</keyword>
<keyword id="KW-0456">Lyase</keyword>
<keyword id="KW-1185">Reference proteome</keyword>
<organism>
    <name type="scientific">Rubrobacter xylanophilus (strain DSM 9941 / JCM 11954 / NBRC 16129 / PRD-1)</name>
    <dbReference type="NCBI Taxonomy" id="266117"/>
    <lineage>
        <taxon>Bacteria</taxon>
        <taxon>Bacillati</taxon>
        <taxon>Actinomycetota</taxon>
        <taxon>Rubrobacteria</taxon>
        <taxon>Rubrobacterales</taxon>
        <taxon>Rubrobacteraceae</taxon>
        <taxon>Rubrobacter</taxon>
    </lineage>
</organism>
<sequence>MRAPLGPAEIRRLLPHRYPFLLVDRIEELEPGVRAVGVKNVTQNEPFFQGHFPGYPVMPGVLIVEAMAQVGAVGVMAVEEYRGRLALFAGIDGVRFRRQVVPGDALRMEVEIDRLRGRVGRGRGLAFVGGERACEAELMFAFAERGEESR</sequence>
<reference key="1">
    <citation type="submission" date="2006-06" db="EMBL/GenBank/DDBJ databases">
        <title>Complete sequence of Rubrobacter xylanophilus DSM 9941.</title>
        <authorList>
            <consortium name="US DOE Joint Genome Institute"/>
            <person name="Copeland A."/>
            <person name="Lucas S."/>
            <person name="Lapidus A."/>
            <person name="Barry K."/>
            <person name="Detter J.C."/>
            <person name="Glavina del Rio T."/>
            <person name="Hammon N."/>
            <person name="Israni S."/>
            <person name="Dalin E."/>
            <person name="Tice H."/>
            <person name="Pitluck S."/>
            <person name="Munk A.C."/>
            <person name="Brettin T."/>
            <person name="Bruce D."/>
            <person name="Han C."/>
            <person name="Tapia R."/>
            <person name="Gilna P."/>
            <person name="Schmutz J."/>
            <person name="Larimer F."/>
            <person name="Land M."/>
            <person name="Hauser L."/>
            <person name="Kyrpides N."/>
            <person name="Lykidis A."/>
            <person name="da Costa M.S."/>
            <person name="Rainey F.A."/>
            <person name="Empadinhas N."/>
            <person name="Jolivet E."/>
            <person name="Battista J.R."/>
            <person name="Richardson P."/>
        </authorList>
    </citation>
    <scope>NUCLEOTIDE SEQUENCE [LARGE SCALE GENOMIC DNA]</scope>
    <source>
        <strain>DSM 9941 / JCM 11954 / NBRC 16129 / PRD-1</strain>
    </source>
</reference>
<evidence type="ECO:0000255" key="1">
    <source>
        <dbReference type="HAMAP-Rule" id="MF_00406"/>
    </source>
</evidence>